<gene>
    <name evidence="1" type="primary">rplB</name>
    <name type="ordered locus">Sbal195_0203</name>
</gene>
<dbReference type="EMBL" id="CP000891">
    <property type="protein sequence ID" value="ABX47385.1"/>
    <property type="molecule type" value="Genomic_DNA"/>
</dbReference>
<dbReference type="RefSeq" id="WP_006083597.1">
    <property type="nucleotide sequence ID" value="NC_009997.1"/>
</dbReference>
<dbReference type="SMR" id="A9KWA5"/>
<dbReference type="GeneID" id="11770562"/>
<dbReference type="KEGG" id="sbn:Sbal195_0203"/>
<dbReference type="HOGENOM" id="CLU_036235_2_1_6"/>
<dbReference type="Proteomes" id="UP000000770">
    <property type="component" value="Chromosome"/>
</dbReference>
<dbReference type="GO" id="GO:0015934">
    <property type="term" value="C:large ribosomal subunit"/>
    <property type="evidence" value="ECO:0007669"/>
    <property type="project" value="InterPro"/>
</dbReference>
<dbReference type="GO" id="GO:0019843">
    <property type="term" value="F:rRNA binding"/>
    <property type="evidence" value="ECO:0007669"/>
    <property type="project" value="UniProtKB-UniRule"/>
</dbReference>
<dbReference type="GO" id="GO:0003735">
    <property type="term" value="F:structural constituent of ribosome"/>
    <property type="evidence" value="ECO:0007669"/>
    <property type="project" value="InterPro"/>
</dbReference>
<dbReference type="GO" id="GO:0016740">
    <property type="term" value="F:transferase activity"/>
    <property type="evidence" value="ECO:0007669"/>
    <property type="project" value="InterPro"/>
</dbReference>
<dbReference type="GO" id="GO:0002181">
    <property type="term" value="P:cytoplasmic translation"/>
    <property type="evidence" value="ECO:0007669"/>
    <property type="project" value="TreeGrafter"/>
</dbReference>
<dbReference type="FunFam" id="2.30.30.30:FF:000001">
    <property type="entry name" value="50S ribosomal protein L2"/>
    <property type="match status" value="1"/>
</dbReference>
<dbReference type="FunFam" id="2.40.50.140:FF:000003">
    <property type="entry name" value="50S ribosomal protein L2"/>
    <property type="match status" value="1"/>
</dbReference>
<dbReference type="FunFam" id="4.10.950.10:FF:000001">
    <property type="entry name" value="50S ribosomal protein L2"/>
    <property type="match status" value="1"/>
</dbReference>
<dbReference type="Gene3D" id="2.30.30.30">
    <property type="match status" value="1"/>
</dbReference>
<dbReference type="Gene3D" id="2.40.50.140">
    <property type="entry name" value="Nucleic acid-binding proteins"/>
    <property type="match status" value="1"/>
</dbReference>
<dbReference type="Gene3D" id="4.10.950.10">
    <property type="entry name" value="Ribosomal protein L2, domain 3"/>
    <property type="match status" value="1"/>
</dbReference>
<dbReference type="HAMAP" id="MF_01320_B">
    <property type="entry name" value="Ribosomal_uL2_B"/>
    <property type="match status" value="1"/>
</dbReference>
<dbReference type="InterPro" id="IPR012340">
    <property type="entry name" value="NA-bd_OB-fold"/>
</dbReference>
<dbReference type="InterPro" id="IPR014722">
    <property type="entry name" value="Rib_uL2_dom2"/>
</dbReference>
<dbReference type="InterPro" id="IPR002171">
    <property type="entry name" value="Ribosomal_uL2"/>
</dbReference>
<dbReference type="InterPro" id="IPR005880">
    <property type="entry name" value="Ribosomal_uL2_bac/org-type"/>
</dbReference>
<dbReference type="InterPro" id="IPR022669">
    <property type="entry name" value="Ribosomal_uL2_C"/>
</dbReference>
<dbReference type="InterPro" id="IPR022671">
    <property type="entry name" value="Ribosomal_uL2_CS"/>
</dbReference>
<dbReference type="InterPro" id="IPR014726">
    <property type="entry name" value="Ribosomal_uL2_dom3"/>
</dbReference>
<dbReference type="InterPro" id="IPR022666">
    <property type="entry name" value="Ribosomal_uL2_RNA-bd_dom"/>
</dbReference>
<dbReference type="InterPro" id="IPR008991">
    <property type="entry name" value="Translation_prot_SH3-like_sf"/>
</dbReference>
<dbReference type="NCBIfam" id="TIGR01171">
    <property type="entry name" value="rplB_bact"/>
    <property type="match status" value="1"/>
</dbReference>
<dbReference type="PANTHER" id="PTHR13691:SF5">
    <property type="entry name" value="LARGE RIBOSOMAL SUBUNIT PROTEIN UL2M"/>
    <property type="match status" value="1"/>
</dbReference>
<dbReference type="PANTHER" id="PTHR13691">
    <property type="entry name" value="RIBOSOMAL PROTEIN L2"/>
    <property type="match status" value="1"/>
</dbReference>
<dbReference type="Pfam" id="PF00181">
    <property type="entry name" value="Ribosomal_L2"/>
    <property type="match status" value="1"/>
</dbReference>
<dbReference type="Pfam" id="PF03947">
    <property type="entry name" value="Ribosomal_L2_C"/>
    <property type="match status" value="1"/>
</dbReference>
<dbReference type="PIRSF" id="PIRSF002158">
    <property type="entry name" value="Ribosomal_L2"/>
    <property type="match status" value="1"/>
</dbReference>
<dbReference type="SMART" id="SM01383">
    <property type="entry name" value="Ribosomal_L2"/>
    <property type="match status" value="1"/>
</dbReference>
<dbReference type="SMART" id="SM01382">
    <property type="entry name" value="Ribosomal_L2_C"/>
    <property type="match status" value="1"/>
</dbReference>
<dbReference type="SUPFAM" id="SSF50249">
    <property type="entry name" value="Nucleic acid-binding proteins"/>
    <property type="match status" value="1"/>
</dbReference>
<dbReference type="SUPFAM" id="SSF50104">
    <property type="entry name" value="Translation proteins SH3-like domain"/>
    <property type="match status" value="1"/>
</dbReference>
<dbReference type="PROSITE" id="PS00467">
    <property type="entry name" value="RIBOSOMAL_L2"/>
    <property type="match status" value="1"/>
</dbReference>
<reference key="1">
    <citation type="submission" date="2007-11" db="EMBL/GenBank/DDBJ databases">
        <title>Complete sequence of chromosome of Shewanella baltica OS195.</title>
        <authorList>
            <consortium name="US DOE Joint Genome Institute"/>
            <person name="Copeland A."/>
            <person name="Lucas S."/>
            <person name="Lapidus A."/>
            <person name="Barry K."/>
            <person name="Glavina del Rio T."/>
            <person name="Dalin E."/>
            <person name="Tice H."/>
            <person name="Pitluck S."/>
            <person name="Chain P."/>
            <person name="Malfatti S."/>
            <person name="Shin M."/>
            <person name="Vergez L."/>
            <person name="Schmutz J."/>
            <person name="Larimer F."/>
            <person name="Land M."/>
            <person name="Hauser L."/>
            <person name="Kyrpides N."/>
            <person name="Kim E."/>
            <person name="Brettar I."/>
            <person name="Rodrigues J."/>
            <person name="Konstantinidis K."/>
            <person name="Klappenbach J."/>
            <person name="Hofle M."/>
            <person name="Tiedje J."/>
            <person name="Richardson P."/>
        </authorList>
    </citation>
    <scope>NUCLEOTIDE SEQUENCE [LARGE SCALE GENOMIC DNA]</scope>
    <source>
        <strain>OS195</strain>
    </source>
</reference>
<name>RL2_SHEB9</name>
<keyword id="KW-0687">Ribonucleoprotein</keyword>
<keyword id="KW-0689">Ribosomal protein</keyword>
<keyword id="KW-0694">RNA-binding</keyword>
<keyword id="KW-0699">rRNA-binding</keyword>
<proteinExistence type="inferred from homology"/>
<sequence length="274" mass="29897">MAVIKCKPTSPGRRHVVKVVNTDLHKGKPFAGLLAKKSKSGGRNNTGRITVRHVGGGHKQHYRLIDFKRDKDGIPAKIERLEYDPNRTANIALVLYADGERRYILAAKGMQAGDKIQSGVAAEIKTGNAMPLRNIPVGSVVHAVEMKPGKGAQIARSAGAYVQVVARDGAYATLRLRSGEMRKVPVDCRATFGEVGNAEHMLRQLGKAGAKRWRGIRPTVRGVAMNPVDHPHGGGEGRTSGGRHPVTPWGVPTKGYKTRSNKRTDKYIVRRRNK</sequence>
<organism>
    <name type="scientific">Shewanella baltica (strain OS195)</name>
    <dbReference type="NCBI Taxonomy" id="399599"/>
    <lineage>
        <taxon>Bacteria</taxon>
        <taxon>Pseudomonadati</taxon>
        <taxon>Pseudomonadota</taxon>
        <taxon>Gammaproteobacteria</taxon>
        <taxon>Alteromonadales</taxon>
        <taxon>Shewanellaceae</taxon>
        <taxon>Shewanella</taxon>
    </lineage>
</organism>
<protein>
    <recommendedName>
        <fullName evidence="1">Large ribosomal subunit protein uL2</fullName>
    </recommendedName>
    <alternativeName>
        <fullName evidence="3">50S ribosomal protein L2</fullName>
    </alternativeName>
</protein>
<comment type="function">
    <text evidence="1">One of the primary rRNA binding proteins. Required for association of the 30S and 50S subunits to form the 70S ribosome, for tRNA binding and peptide bond formation. It has been suggested to have peptidyltransferase activity; this is somewhat controversial. Makes several contacts with the 16S rRNA in the 70S ribosome.</text>
</comment>
<comment type="subunit">
    <text evidence="1">Part of the 50S ribosomal subunit. Forms a bridge to the 30S subunit in the 70S ribosome.</text>
</comment>
<comment type="similarity">
    <text evidence="1">Belongs to the universal ribosomal protein uL2 family.</text>
</comment>
<evidence type="ECO:0000255" key="1">
    <source>
        <dbReference type="HAMAP-Rule" id="MF_01320"/>
    </source>
</evidence>
<evidence type="ECO:0000256" key="2">
    <source>
        <dbReference type="SAM" id="MobiDB-lite"/>
    </source>
</evidence>
<evidence type="ECO:0000305" key="3"/>
<feature type="chain" id="PRO_1000086351" description="Large ribosomal subunit protein uL2">
    <location>
        <begin position="1"/>
        <end position="274"/>
    </location>
</feature>
<feature type="region of interest" description="Disordered" evidence="2">
    <location>
        <begin position="223"/>
        <end position="274"/>
    </location>
</feature>
<accession>A9KWA5</accession>